<comment type="function">
    <text evidence="2">Component of the ubiquinol-cytochrome c reductase complex (complex III or cytochrome b-c1 complex) that is part of the mitochondrial respiratory chain. The b-c1 complex mediates electron transfer from ubiquinol to cytochrome c. Contributes to the generation of a proton gradient across the mitochondrial membrane that is then used for ATP synthesis.</text>
</comment>
<comment type="cofactor">
    <cofactor evidence="2">
        <name>heme b</name>
        <dbReference type="ChEBI" id="CHEBI:60344"/>
    </cofactor>
    <text evidence="2">Binds 2 heme b groups non-covalently.</text>
</comment>
<comment type="subunit">
    <text evidence="2">The cytochrome bc1 complex contains 11 subunits: 3 respiratory subunits (MT-CYB, CYC1 and UQCRFS1), 2 core proteins (UQCRC1 and UQCRC2) and 6 low-molecular weight proteins (UQCRH/QCR6, UQCRB/QCR7, UQCRQ/QCR8, UQCR10/QCR9, UQCR11/QCR10 and a cleavage product of UQCRFS1). This cytochrome bc1 complex then forms a dimer.</text>
</comment>
<comment type="subcellular location">
    <subcellularLocation>
        <location evidence="2">Mitochondrion inner membrane</location>
        <topology evidence="2">Multi-pass membrane protein</topology>
    </subcellularLocation>
</comment>
<comment type="miscellaneous">
    <text evidence="1">Heme 1 (or BL or b562) is low-potential and absorbs at about 562 nm, and heme 2 (or BH or b566) is high-potential and absorbs at about 566 nm.</text>
</comment>
<comment type="similarity">
    <text evidence="3 4">Belongs to the cytochrome b family.</text>
</comment>
<comment type="caution">
    <text evidence="2">The full-length protein contains only eight transmembrane helices, not nine as predicted by bioinformatics tools.</text>
</comment>
<feature type="chain" id="PRO_0000257935" description="Cytochrome b">
    <location>
        <begin position="1"/>
        <end position="381"/>
    </location>
</feature>
<feature type="transmembrane region" description="Helical" evidence="2">
    <location>
        <begin position="33"/>
        <end position="53"/>
    </location>
</feature>
<feature type="transmembrane region" description="Helical" evidence="2">
    <location>
        <begin position="77"/>
        <end position="98"/>
    </location>
</feature>
<feature type="transmembrane region" description="Helical" evidence="2">
    <location>
        <begin position="113"/>
        <end position="133"/>
    </location>
</feature>
<feature type="transmembrane region" description="Helical" evidence="2">
    <location>
        <begin position="178"/>
        <end position="198"/>
    </location>
</feature>
<feature type="transmembrane region" description="Helical" evidence="2">
    <location>
        <begin position="226"/>
        <end position="246"/>
    </location>
</feature>
<feature type="transmembrane region" description="Helical" evidence="2">
    <location>
        <begin position="288"/>
        <end position="308"/>
    </location>
</feature>
<feature type="transmembrane region" description="Helical" evidence="2">
    <location>
        <begin position="320"/>
        <end position="340"/>
    </location>
</feature>
<feature type="transmembrane region" description="Helical" evidence="2">
    <location>
        <begin position="347"/>
        <end position="367"/>
    </location>
</feature>
<feature type="binding site" description="axial binding residue" evidence="2">
    <location>
        <position position="83"/>
    </location>
    <ligand>
        <name>heme b</name>
        <dbReference type="ChEBI" id="CHEBI:60344"/>
        <label>b562</label>
    </ligand>
    <ligandPart>
        <name>Fe</name>
        <dbReference type="ChEBI" id="CHEBI:18248"/>
    </ligandPart>
</feature>
<feature type="binding site" description="axial binding residue" evidence="2">
    <location>
        <position position="97"/>
    </location>
    <ligand>
        <name>heme b</name>
        <dbReference type="ChEBI" id="CHEBI:60344"/>
        <label>b566</label>
    </ligand>
    <ligandPart>
        <name>Fe</name>
        <dbReference type="ChEBI" id="CHEBI:18248"/>
    </ligandPart>
</feature>
<feature type="binding site" description="axial binding residue" evidence="2">
    <location>
        <position position="182"/>
    </location>
    <ligand>
        <name>heme b</name>
        <dbReference type="ChEBI" id="CHEBI:60344"/>
        <label>b562</label>
    </ligand>
    <ligandPart>
        <name>Fe</name>
        <dbReference type="ChEBI" id="CHEBI:18248"/>
    </ligandPart>
</feature>
<feature type="binding site" description="axial binding residue" evidence="2">
    <location>
        <position position="196"/>
    </location>
    <ligand>
        <name>heme b</name>
        <dbReference type="ChEBI" id="CHEBI:60344"/>
        <label>b566</label>
    </ligand>
    <ligandPart>
        <name>Fe</name>
        <dbReference type="ChEBI" id="CHEBI:18248"/>
    </ligandPart>
</feature>
<feature type="binding site" evidence="2">
    <location>
        <position position="201"/>
    </location>
    <ligand>
        <name>a ubiquinone</name>
        <dbReference type="ChEBI" id="CHEBI:16389"/>
    </ligand>
</feature>
<reference key="1">
    <citation type="journal article" date="2002" name="Mol. Ecol.">
        <title>Molecular analysis of a 11 700-year-old rodent midden from the Atacama Desert, Chile.</title>
        <authorList>
            <person name="Kuch M."/>
            <person name="Rohland N."/>
            <person name="Betancourt J.L."/>
            <person name="Latorre C."/>
            <person name="Steppan S."/>
            <person name="Poinar H.N."/>
        </authorList>
    </citation>
    <scope>NUCLEOTIDE SEQUENCE [GENOMIC DNA]</scope>
</reference>
<reference key="2">
    <citation type="submission" date="2005-03" db="EMBL/GenBank/DDBJ databases">
        <title>A molecular reappraisal of the systematics of the leaf-eared mice Phyllotis and their relatives.</title>
        <authorList>
            <person name="Steppan S.J."/>
            <person name="Ramirez O."/>
            <person name="Banbury J."/>
            <person name="Huchon D."/>
            <person name="Pacheco V."/>
            <person name="Walker L.I."/>
            <person name="Spotorno A.E."/>
        </authorList>
    </citation>
    <scope>NUCLEOTIDE SEQUENCE [GENOMIC DNA]</scope>
</reference>
<keyword id="KW-0249">Electron transport</keyword>
<keyword id="KW-0349">Heme</keyword>
<keyword id="KW-0408">Iron</keyword>
<keyword id="KW-0472">Membrane</keyword>
<keyword id="KW-0479">Metal-binding</keyword>
<keyword id="KW-0496">Mitochondrion</keyword>
<keyword id="KW-0999">Mitochondrion inner membrane</keyword>
<keyword id="KW-0679">Respiratory chain</keyword>
<keyword id="KW-0812">Transmembrane</keyword>
<keyword id="KW-1133">Transmembrane helix</keyword>
<keyword id="KW-0813">Transport</keyword>
<keyword id="KW-0830">Ubiquinone</keyword>
<dbReference type="EMBL" id="AF484208">
    <property type="protein sequence ID" value="AAL90864.1"/>
    <property type="molecule type" value="Genomic_DNA"/>
</dbReference>
<dbReference type="EMBL" id="AY956740">
    <property type="protein sequence ID" value="AAY32851.1"/>
    <property type="molecule type" value="Genomic_DNA"/>
</dbReference>
<dbReference type="SMR" id="Q8SEH7"/>
<dbReference type="GO" id="GO:0005743">
    <property type="term" value="C:mitochondrial inner membrane"/>
    <property type="evidence" value="ECO:0007669"/>
    <property type="project" value="UniProtKB-SubCell"/>
</dbReference>
<dbReference type="GO" id="GO:0045275">
    <property type="term" value="C:respiratory chain complex III"/>
    <property type="evidence" value="ECO:0007669"/>
    <property type="project" value="InterPro"/>
</dbReference>
<dbReference type="GO" id="GO:0046872">
    <property type="term" value="F:metal ion binding"/>
    <property type="evidence" value="ECO:0007669"/>
    <property type="project" value="UniProtKB-KW"/>
</dbReference>
<dbReference type="GO" id="GO:0008121">
    <property type="term" value="F:ubiquinol-cytochrome-c reductase activity"/>
    <property type="evidence" value="ECO:0007669"/>
    <property type="project" value="InterPro"/>
</dbReference>
<dbReference type="GO" id="GO:0006122">
    <property type="term" value="P:mitochondrial electron transport, ubiquinol to cytochrome c"/>
    <property type="evidence" value="ECO:0007669"/>
    <property type="project" value="TreeGrafter"/>
</dbReference>
<dbReference type="CDD" id="cd00290">
    <property type="entry name" value="cytochrome_b_C"/>
    <property type="match status" value="1"/>
</dbReference>
<dbReference type="CDD" id="cd00284">
    <property type="entry name" value="Cytochrome_b_N"/>
    <property type="match status" value="1"/>
</dbReference>
<dbReference type="FunFam" id="1.20.810.10:FF:000002">
    <property type="entry name" value="Cytochrome b"/>
    <property type="match status" value="1"/>
</dbReference>
<dbReference type="Gene3D" id="1.20.810.10">
    <property type="entry name" value="Cytochrome Bc1 Complex, Chain C"/>
    <property type="match status" value="1"/>
</dbReference>
<dbReference type="InterPro" id="IPR005798">
    <property type="entry name" value="Cyt_b/b6_C"/>
</dbReference>
<dbReference type="InterPro" id="IPR036150">
    <property type="entry name" value="Cyt_b/b6_C_sf"/>
</dbReference>
<dbReference type="InterPro" id="IPR005797">
    <property type="entry name" value="Cyt_b/b6_N"/>
</dbReference>
<dbReference type="InterPro" id="IPR027387">
    <property type="entry name" value="Cytb/b6-like_sf"/>
</dbReference>
<dbReference type="InterPro" id="IPR030689">
    <property type="entry name" value="Cytochrome_b"/>
</dbReference>
<dbReference type="InterPro" id="IPR048260">
    <property type="entry name" value="Cytochrome_b_C_euk/bac"/>
</dbReference>
<dbReference type="InterPro" id="IPR048259">
    <property type="entry name" value="Cytochrome_b_N_euk/bac"/>
</dbReference>
<dbReference type="InterPro" id="IPR016174">
    <property type="entry name" value="Di-haem_cyt_TM"/>
</dbReference>
<dbReference type="PANTHER" id="PTHR19271">
    <property type="entry name" value="CYTOCHROME B"/>
    <property type="match status" value="1"/>
</dbReference>
<dbReference type="PANTHER" id="PTHR19271:SF16">
    <property type="entry name" value="CYTOCHROME B"/>
    <property type="match status" value="1"/>
</dbReference>
<dbReference type="Pfam" id="PF00032">
    <property type="entry name" value="Cytochrom_B_C"/>
    <property type="match status" value="1"/>
</dbReference>
<dbReference type="Pfam" id="PF00033">
    <property type="entry name" value="Cytochrome_B"/>
    <property type="match status" value="1"/>
</dbReference>
<dbReference type="PIRSF" id="PIRSF038885">
    <property type="entry name" value="COB"/>
    <property type="match status" value="1"/>
</dbReference>
<dbReference type="SUPFAM" id="SSF81648">
    <property type="entry name" value="a domain/subunit of cytochrome bc1 complex (Ubiquinol-cytochrome c reductase)"/>
    <property type="match status" value="1"/>
</dbReference>
<dbReference type="SUPFAM" id="SSF81342">
    <property type="entry name" value="Transmembrane di-heme cytochromes"/>
    <property type="match status" value="1"/>
</dbReference>
<dbReference type="PROSITE" id="PS51003">
    <property type="entry name" value="CYTB_CTER"/>
    <property type="match status" value="1"/>
</dbReference>
<dbReference type="PROSITE" id="PS51002">
    <property type="entry name" value="CYTB_NTER"/>
    <property type="match status" value="1"/>
</dbReference>
<protein>
    <recommendedName>
        <fullName>Cytochrome b</fullName>
    </recommendedName>
    <alternativeName>
        <fullName>Complex III subunit 3</fullName>
    </alternativeName>
    <alternativeName>
        <fullName>Complex III subunit III</fullName>
    </alternativeName>
    <alternativeName>
        <fullName>Cytochrome b-c1 complex subunit 3</fullName>
    </alternativeName>
    <alternativeName>
        <fullName>Ubiquinol-cytochrome-c reductase complex cytochrome b subunit</fullName>
    </alternativeName>
</protein>
<accession>Q8SEH7</accession>
<name>CYB_PHYLI</name>
<organism>
    <name type="scientific">Phyllotis limatus</name>
    <name type="common">Leaf-eared mouse</name>
    <dbReference type="NCBI Taxonomy" id="59936"/>
    <lineage>
        <taxon>Eukaryota</taxon>
        <taxon>Metazoa</taxon>
        <taxon>Chordata</taxon>
        <taxon>Craniata</taxon>
        <taxon>Vertebrata</taxon>
        <taxon>Euteleostomi</taxon>
        <taxon>Mammalia</taxon>
        <taxon>Eutheria</taxon>
        <taxon>Euarchontoglires</taxon>
        <taxon>Glires</taxon>
        <taxon>Rodentia</taxon>
        <taxon>Myomorpha</taxon>
        <taxon>Muroidea</taxon>
        <taxon>Cricetidae</taxon>
        <taxon>Sigmodontinae</taxon>
        <taxon>Phyllotis</taxon>
    </lineage>
</organism>
<sequence length="381" mass="43035">MTIMRKNHPLLKLVNSSFIDLPTPSNISSWWNFGSLLGVCLIMQILTGLFLAMHYTSDTATAFSSVTHICRDVNYGWLIRYLHANGASMFFICMFIHVGRGIYYGSYMLSETWNIGIILLLTTMATAFVGYVLPWGQMSFWGATVITNLLSAIPYIGTTLVEWIWGGFSVDKATLTRFFAFHFILPFIITAFVLVHLLFLHETGSNNPSGLNSDSDKIPFHPYYTIKDLLGVLLLLMVLMILVLFFPDVLGDPDNYTPANPLNTPAHIKPEWYFLFAYAILRSIPNKLGGVLALILSILVLALFPLINSSKQHGLVYRPITQTIYWIFIANLLILTWIGGQPVEYPFTTIGQIASIMYFSIIIIFMPMASMIENDILKLHY</sequence>
<proteinExistence type="inferred from homology"/>
<gene>
    <name type="primary">MT-CYB</name>
    <name type="synonym">COB</name>
    <name type="synonym">CYTB</name>
    <name type="synonym">MTCYB</name>
</gene>
<geneLocation type="mitochondrion"/>
<evidence type="ECO:0000250" key="1"/>
<evidence type="ECO:0000250" key="2">
    <source>
        <dbReference type="UniProtKB" id="P00157"/>
    </source>
</evidence>
<evidence type="ECO:0000255" key="3">
    <source>
        <dbReference type="PROSITE-ProRule" id="PRU00967"/>
    </source>
</evidence>
<evidence type="ECO:0000255" key="4">
    <source>
        <dbReference type="PROSITE-ProRule" id="PRU00968"/>
    </source>
</evidence>